<proteinExistence type="inferred from homology"/>
<keyword id="KW-1262">Eukaryotic host gene expression shutoff by virus</keyword>
<keyword id="KW-1191">Eukaryotic host transcription shutoff by virus</keyword>
<keyword id="KW-1035">Host cytoplasm</keyword>
<keyword id="KW-1190">Host gene expression shutoff by virus</keyword>
<keyword id="KW-1048">Host nucleus</keyword>
<keyword id="KW-0945">Host-virus interaction</keyword>
<keyword id="KW-1104">Inhibition of host RNA polymerase II by virus</keyword>
<keyword id="KW-0547">Nucleotide-binding</keyword>
<keyword id="KW-0548">Nucleotidyltransferase</keyword>
<keyword id="KW-0597">Phosphoprotein</keyword>
<keyword id="KW-0696">RNA-directed RNA polymerase</keyword>
<keyword id="KW-0808">Transferase</keyword>
<keyword id="KW-0693">Viral RNA replication</keyword>
<keyword id="KW-1195">Viral transcription</keyword>
<organismHost>
    <name type="scientific">Aves</name>
    <dbReference type="NCBI Taxonomy" id="8782"/>
</organismHost>
<organismHost>
    <name type="scientific">Felis catus</name>
    <name type="common">Cat</name>
    <name type="synonym">Felis silvestris catus</name>
    <dbReference type="NCBI Taxonomy" id="9685"/>
</organismHost>
<organismHost>
    <name type="scientific">Homo sapiens</name>
    <name type="common">Human</name>
    <dbReference type="NCBI Taxonomy" id="9606"/>
</organismHost>
<organismHost>
    <name type="scientific">Panthera pardus</name>
    <name type="common">Leopard</name>
    <name type="synonym">Felis pardus</name>
    <dbReference type="NCBI Taxonomy" id="9691"/>
</organismHost>
<organismHost>
    <name type="scientific">Panthera tigris</name>
    <name type="common">Tiger</name>
    <dbReference type="NCBI Taxonomy" id="9694"/>
</organismHost>
<organismHost>
    <name type="scientific">Sus scrofa</name>
    <name type="common">Pig</name>
    <dbReference type="NCBI Taxonomy" id="9823"/>
</organismHost>
<name>RDRP_I02A7</name>
<comment type="function">
    <text evidence="1">RNA-dependent RNA polymerase which is responsible for replication and transcription of virus RNA segments. The transcription of viral mRNAs occurs by a unique mechanism called cap-snatching. 5' methylated caps of cellular mRNAs are cleaved after 10-13 nucleotides by PA. In turn, these short capped RNAs are used as primers by PB1 for transcription of viral mRNAs. During virus replication, PB1 initiates RNA synthesis and copy vRNA into complementary RNA (cRNA) which in turn serves as a template for the production of more vRNAs.</text>
</comment>
<comment type="catalytic activity">
    <reaction evidence="1">
        <text>RNA(n) + a ribonucleoside 5'-triphosphate = RNA(n+1) + diphosphate</text>
        <dbReference type="Rhea" id="RHEA:21248"/>
        <dbReference type="Rhea" id="RHEA-COMP:14527"/>
        <dbReference type="Rhea" id="RHEA-COMP:17342"/>
        <dbReference type="ChEBI" id="CHEBI:33019"/>
        <dbReference type="ChEBI" id="CHEBI:61557"/>
        <dbReference type="ChEBI" id="CHEBI:140395"/>
        <dbReference type="EC" id="2.7.7.48"/>
    </reaction>
</comment>
<comment type="subunit">
    <text evidence="1">Influenza RNA polymerase is composed of three subunits: PB1, PB2 and PA. Interacts (via N-terminus) with PA (via C-terminus). Interacts (via C-terminus) with PB2 (via N-terminus); this interaction is essential for transcription initiation.</text>
</comment>
<comment type="subcellular location">
    <subcellularLocation>
        <location evidence="1">Host nucleus</location>
    </subcellularLocation>
    <subcellularLocation>
        <location evidence="1">Host cytoplasm</location>
    </subcellularLocation>
</comment>
<comment type="PTM">
    <text evidence="1">Phosphorylated by host PRKCA.</text>
</comment>
<comment type="similarity">
    <text evidence="1">Belongs to the influenza viruses polymerase PB1 family.</text>
</comment>
<gene>
    <name evidence="1" type="primary">PB1</name>
</gene>
<dbReference type="EC" id="2.7.7.48" evidence="1"/>
<dbReference type="EMBL" id="AY651693">
    <property type="protein sequence ID" value="AAT73524.2"/>
    <property type="molecule type" value="Genomic_RNA"/>
</dbReference>
<dbReference type="SMR" id="Q6DNQ9"/>
<dbReference type="GO" id="GO:0030430">
    <property type="term" value="C:host cell cytoplasm"/>
    <property type="evidence" value="ECO:0007669"/>
    <property type="project" value="UniProtKB-SubCell"/>
</dbReference>
<dbReference type="GO" id="GO:0042025">
    <property type="term" value="C:host cell nucleus"/>
    <property type="evidence" value="ECO:0007669"/>
    <property type="project" value="UniProtKB-SubCell"/>
</dbReference>
<dbReference type="GO" id="GO:0000166">
    <property type="term" value="F:nucleotide binding"/>
    <property type="evidence" value="ECO:0007669"/>
    <property type="project" value="UniProtKB-UniRule"/>
</dbReference>
<dbReference type="GO" id="GO:0003723">
    <property type="term" value="F:RNA binding"/>
    <property type="evidence" value="ECO:0007669"/>
    <property type="project" value="InterPro"/>
</dbReference>
<dbReference type="GO" id="GO:0003968">
    <property type="term" value="F:RNA-directed RNA polymerase activity"/>
    <property type="evidence" value="ECO:0007669"/>
    <property type="project" value="UniProtKB-UniRule"/>
</dbReference>
<dbReference type="GO" id="GO:0006351">
    <property type="term" value="P:DNA-templated transcription"/>
    <property type="evidence" value="ECO:0007669"/>
    <property type="project" value="UniProtKB-UniRule"/>
</dbReference>
<dbReference type="GO" id="GO:0039657">
    <property type="term" value="P:symbiont-mediated suppression of host gene expression"/>
    <property type="evidence" value="ECO:0007669"/>
    <property type="project" value="UniProtKB-KW"/>
</dbReference>
<dbReference type="GO" id="GO:0039523">
    <property type="term" value="P:symbiont-mediated suppression of host mRNA transcription via inhibition of RNA polymerase II activity"/>
    <property type="evidence" value="ECO:0007669"/>
    <property type="project" value="UniProtKB-UniRule"/>
</dbReference>
<dbReference type="GO" id="GO:0039694">
    <property type="term" value="P:viral RNA genome replication"/>
    <property type="evidence" value="ECO:0007669"/>
    <property type="project" value="UniProtKB-UniRule"/>
</dbReference>
<dbReference type="GO" id="GO:0019083">
    <property type="term" value="P:viral transcription"/>
    <property type="evidence" value="ECO:0007669"/>
    <property type="project" value="UniProtKB-KW"/>
</dbReference>
<dbReference type="Gene3D" id="6.10.140.720">
    <property type="match status" value="1"/>
</dbReference>
<dbReference type="HAMAP" id="MF_04065">
    <property type="entry name" value="INFV_RDRP"/>
    <property type="match status" value="1"/>
</dbReference>
<dbReference type="InterPro" id="IPR007099">
    <property type="entry name" value="RNA-dir_pol_NSvirus"/>
</dbReference>
<dbReference type="InterPro" id="IPR001407">
    <property type="entry name" value="RNA_pol_PB1_influenza"/>
</dbReference>
<dbReference type="Pfam" id="PF00602">
    <property type="entry name" value="Flu_PB1"/>
    <property type="match status" value="1"/>
</dbReference>
<dbReference type="PIRSF" id="PIRSF000827">
    <property type="entry name" value="RdRPol_OMV"/>
    <property type="match status" value="1"/>
</dbReference>
<dbReference type="PROSITE" id="PS50525">
    <property type="entry name" value="RDRP_SSRNA_NEG_SEG"/>
    <property type="match status" value="1"/>
</dbReference>
<organism>
    <name type="scientific">Influenza A virus (strain A/Teal/China/2978.1/2002 H5N1 genotype W)</name>
    <dbReference type="NCBI Taxonomy" id="284215"/>
    <lineage>
        <taxon>Viruses</taxon>
        <taxon>Riboviria</taxon>
        <taxon>Orthornavirae</taxon>
        <taxon>Negarnaviricota</taxon>
        <taxon>Polyploviricotina</taxon>
        <taxon>Insthoviricetes</taxon>
        <taxon>Articulavirales</taxon>
        <taxon>Orthomyxoviridae</taxon>
        <taxon>Alphainfluenzavirus</taxon>
        <taxon>Alphainfluenzavirus influenzae</taxon>
        <taxon>Influenza A virus</taxon>
    </lineage>
</organism>
<reference key="1">
    <citation type="journal article" date="2004" name="Nature">
        <title>Genesis of a highly pathogenic and potentially pandemic H5N1 influenza virus in eastern Asia.</title>
        <authorList>
            <person name="Li K.S."/>
            <person name="Guan Y."/>
            <person name="Wang J."/>
            <person name="Smith G.J.D."/>
            <person name="Xu K.M."/>
            <person name="Duan L."/>
            <person name="Rahardjo A.P."/>
            <person name="Puthavathana P."/>
            <person name="Buranathai C."/>
            <person name="Nguyen T.D."/>
            <person name="Estoepangestie A.T.S."/>
            <person name="Chaisingh A."/>
            <person name="Auewarakul P."/>
            <person name="Long H.T."/>
            <person name="Hanh N.T.H."/>
            <person name="Webby R.J."/>
            <person name="Poon L.L.M."/>
            <person name="Chen H."/>
            <person name="Shortridge K.F."/>
            <person name="Yuen K.Y."/>
            <person name="Webster R.G."/>
            <person name="Peiris J.S.M."/>
        </authorList>
    </citation>
    <scope>NUCLEOTIDE SEQUENCE [GENOMIC RNA]</scope>
</reference>
<reference key="2">
    <citation type="submission" date="2008-03" db="EMBL/GenBank/DDBJ databases">
        <authorList>
            <person name="Li K.S."/>
            <person name="Guan Y."/>
            <person name="Wang J."/>
            <person name="Smith G.J.D."/>
            <person name="Xu K.M."/>
            <person name="Duan L."/>
            <person name="Rahardjo A.P."/>
            <person name="Puthavathana P."/>
            <person name="Buranathai C."/>
            <person name="Nguyen T.D."/>
            <person name="Estoepangestie A.T.S."/>
            <person name="Chaisingh A."/>
            <person name="Auewarakul P."/>
            <person name="Long H.T."/>
            <person name="Hanh N.T.H."/>
            <person name="Lim W."/>
            <person name="Webby R.J."/>
            <person name="Poon L.L.M."/>
            <person name="Chen H."/>
            <person name="Shortridge K.F."/>
            <person name="Yuen K.Y."/>
            <person name="Webster R.G."/>
            <person name="Peiris J.S.M."/>
        </authorList>
    </citation>
    <scope>SEQUENCE REVISION</scope>
</reference>
<feature type="chain" id="PRO_0000311169" description="RNA-directed RNA polymerase catalytic subunit">
    <location>
        <begin position="1"/>
        <end position="757"/>
    </location>
</feature>
<feature type="domain" description="RdRp catalytic" evidence="1">
    <location>
        <begin position="286"/>
        <end position="483"/>
    </location>
</feature>
<feature type="region of interest" description="Disordered" evidence="2">
    <location>
        <begin position="52"/>
        <end position="82"/>
    </location>
</feature>
<feature type="region of interest" description="Promoter-binding site" evidence="1">
    <location>
        <begin position="249"/>
        <end position="256"/>
    </location>
</feature>
<feature type="short sequence motif" description="Nuclear localization signal" evidence="1">
    <location>
        <begin position="187"/>
        <end position="195"/>
    </location>
</feature>
<feature type="short sequence motif" description="Nuclear localization signal" evidence="1">
    <location>
        <begin position="203"/>
        <end position="216"/>
    </location>
</feature>
<feature type="compositionally biased region" description="Polar residues" evidence="2">
    <location>
        <begin position="55"/>
        <end position="64"/>
    </location>
</feature>
<accession>Q6DNQ9</accession>
<protein>
    <recommendedName>
        <fullName evidence="1">RNA-directed RNA polymerase catalytic subunit</fullName>
        <ecNumber evidence="1">2.7.7.48</ecNumber>
    </recommendedName>
    <alternativeName>
        <fullName evidence="1">Polymerase basic protein 1</fullName>
        <shortName evidence="1">PB1</shortName>
    </alternativeName>
    <alternativeName>
        <fullName evidence="1">RNA-directed RNA polymerase subunit P1</fullName>
    </alternativeName>
</protein>
<evidence type="ECO:0000255" key="1">
    <source>
        <dbReference type="HAMAP-Rule" id="MF_04065"/>
    </source>
</evidence>
<evidence type="ECO:0000256" key="2">
    <source>
        <dbReference type="SAM" id="MobiDB-lite"/>
    </source>
</evidence>
<sequence>MDVNPTLLFLKVPVQNAISTTFPYTGDPPYSHGTGTGYTMDTVNRTHQYSEKGKWTTNTETGAPQLNPIDGPLPEDNEPSGYAQTDCVLEAMAFLEESHPGIFENSCLETMEIVQQTRVDKLTQGRQTYDWTLNRNQPAATALANTIEIFRSNGLTANESGRLIDFLKDVMESMDKEDMEITTHFQRKRRVRDNMTKKMVTQRTIGKKKQRLNKKSYLIRALTLNTMTKDAERGKLKRRAIATPGMQIRGFVYFVETLARSICEKLEQSGLPVGGNEKKAKLANVVRKMMTNSQDTELSFTITGDNTKWNENQNPRMFLAMITYITRNQPEWFRNVLSIAPIMFSNKMARLGKGYMFESKSMKLRTQIPAEMLANIDLKYFNELTKKKIEKIRPLLIDGTASLSPGMMMGMFNMLSTVLGVSILNLGQKRYTKTTYWWDGLQSSDDFALIVNAPNHEGIQAGVDRFYRTCKLVGINMSKKKSYINRTGTFEFTSFFYRYGFVANFSMELPSFGVSGINESADMSIGVTVIKNNMINNDLGPATAQMALQLFIKDYRYTYRCHRGDTQIQTRRSFELKKLWEQTRSKAGLLVSDGGPNLYNIRNLHIPEVCLKWELMDEDYQGRLCNPLNPFVSHKEIESVNNAVVMPAHGPAKSMEYDAVATTHSWIPKRNRSILNTSQRGILEDEQMYQKCCNLFEKFFPSSSYRRPVGISSMVEAMVSRARIDARIDFESGRIKKEEFAEIMKICSTIEELRRQK</sequence>